<sequence>MFRGATLVNLDSKGRITVPSRYRTTLNEASEGQMVCTIDLNQPCLLLYTLPEWEKIELKLAALSSMNPAERRVQRLLLGHASECQMDSAGRLLLASTLRQHAGLTKEVMLVGQFNKFELWDEQVWYQQIKEDILAEQTSQEPLSTRLLDLSL</sequence>
<dbReference type="EMBL" id="AM942759">
    <property type="protein sequence ID" value="CAR44159.1"/>
    <property type="molecule type" value="Genomic_DNA"/>
</dbReference>
<dbReference type="RefSeq" id="WP_004248567.1">
    <property type="nucleotide sequence ID" value="NC_010554.1"/>
</dbReference>
<dbReference type="SMR" id="B4F120"/>
<dbReference type="DNASU" id="6802813"/>
<dbReference type="EnsemblBacteria" id="CAR44159">
    <property type="protein sequence ID" value="CAR44159"/>
    <property type="gene ID" value="PMI2079"/>
</dbReference>
<dbReference type="GeneID" id="6802813"/>
<dbReference type="KEGG" id="pmr:PMI2079"/>
<dbReference type="eggNOG" id="COG2001">
    <property type="taxonomic scope" value="Bacteria"/>
</dbReference>
<dbReference type="HOGENOM" id="CLU_107907_2_0_6"/>
<dbReference type="Proteomes" id="UP000008319">
    <property type="component" value="Chromosome"/>
</dbReference>
<dbReference type="GO" id="GO:0005737">
    <property type="term" value="C:cytoplasm"/>
    <property type="evidence" value="ECO:0007669"/>
    <property type="project" value="UniProtKB-UniRule"/>
</dbReference>
<dbReference type="GO" id="GO:0009295">
    <property type="term" value="C:nucleoid"/>
    <property type="evidence" value="ECO:0007669"/>
    <property type="project" value="UniProtKB-SubCell"/>
</dbReference>
<dbReference type="GO" id="GO:0003700">
    <property type="term" value="F:DNA-binding transcription factor activity"/>
    <property type="evidence" value="ECO:0007669"/>
    <property type="project" value="UniProtKB-UniRule"/>
</dbReference>
<dbReference type="GO" id="GO:0000976">
    <property type="term" value="F:transcription cis-regulatory region binding"/>
    <property type="evidence" value="ECO:0007669"/>
    <property type="project" value="TreeGrafter"/>
</dbReference>
<dbReference type="GO" id="GO:2000143">
    <property type="term" value="P:negative regulation of DNA-templated transcription initiation"/>
    <property type="evidence" value="ECO:0007669"/>
    <property type="project" value="TreeGrafter"/>
</dbReference>
<dbReference type="CDD" id="cd16321">
    <property type="entry name" value="MraZ_C"/>
    <property type="match status" value="1"/>
</dbReference>
<dbReference type="CDD" id="cd16320">
    <property type="entry name" value="MraZ_N"/>
    <property type="match status" value="1"/>
</dbReference>
<dbReference type="FunFam" id="3.40.1550.20:FF:000001">
    <property type="entry name" value="Transcriptional regulator MraZ"/>
    <property type="match status" value="1"/>
</dbReference>
<dbReference type="Gene3D" id="3.40.1550.20">
    <property type="entry name" value="Transcriptional regulator MraZ domain"/>
    <property type="match status" value="1"/>
</dbReference>
<dbReference type="HAMAP" id="MF_01008">
    <property type="entry name" value="MraZ"/>
    <property type="match status" value="1"/>
</dbReference>
<dbReference type="InterPro" id="IPR003444">
    <property type="entry name" value="MraZ"/>
</dbReference>
<dbReference type="InterPro" id="IPR035644">
    <property type="entry name" value="MraZ_C"/>
</dbReference>
<dbReference type="InterPro" id="IPR020603">
    <property type="entry name" value="MraZ_dom"/>
</dbReference>
<dbReference type="InterPro" id="IPR035642">
    <property type="entry name" value="MraZ_N"/>
</dbReference>
<dbReference type="InterPro" id="IPR038619">
    <property type="entry name" value="MraZ_sf"/>
</dbReference>
<dbReference type="InterPro" id="IPR007159">
    <property type="entry name" value="SpoVT-AbrB_dom"/>
</dbReference>
<dbReference type="InterPro" id="IPR037914">
    <property type="entry name" value="SpoVT-AbrB_sf"/>
</dbReference>
<dbReference type="NCBIfam" id="TIGR00242">
    <property type="entry name" value="division/cell wall cluster transcriptional repressor MraZ"/>
    <property type="match status" value="1"/>
</dbReference>
<dbReference type="PANTHER" id="PTHR34701">
    <property type="entry name" value="TRANSCRIPTIONAL REGULATOR MRAZ"/>
    <property type="match status" value="1"/>
</dbReference>
<dbReference type="PANTHER" id="PTHR34701:SF1">
    <property type="entry name" value="TRANSCRIPTIONAL REGULATOR MRAZ"/>
    <property type="match status" value="1"/>
</dbReference>
<dbReference type="Pfam" id="PF02381">
    <property type="entry name" value="MraZ"/>
    <property type="match status" value="2"/>
</dbReference>
<dbReference type="SUPFAM" id="SSF89447">
    <property type="entry name" value="AbrB/MazE/MraZ-like"/>
    <property type="match status" value="1"/>
</dbReference>
<dbReference type="PROSITE" id="PS51740">
    <property type="entry name" value="SPOVT_ABRB"/>
    <property type="match status" value="2"/>
</dbReference>
<proteinExistence type="inferred from homology"/>
<evidence type="ECO:0000255" key="1">
    <source>
        <dbReference type="HAMAP-Rule" id="MF_01008"/>
    </source>
</evidence>
<evidence type="ECO:0000255" key="2">
    <source>
        <dbReference type="PROSITE-ProRule" id="PRU01076"/>
    </source>
</evidence>
<feature type="chain" id="PRO_1000191321" description="Transcriptional regulator MraZ">
    <location>
        <begin position="1"/>
        <end position="152"/>
    </location>
</feature>
<feature type="domain" description="SpoVT-AbrB 1" evidence="2">
    <location>
        <begin position="5"/>
        <end position="52"/>
    </location>
</feature>
<feature type="domain" description="SpoVT-AbrB 2" evidence="2">
    <location>
        <begin position="81"/>
        <end position="124"/>
    </location>
</feature>
<accession>B4F120</accession>
<comment type="function">
    <text evidence="1">Negatively regulates its own expression and that of the subsequent genes in the proximal part of the division and cell wall (dcw) gene cluster. Acts by binding directly to DNA. May also regulate the expression of genes outside the dcw cluster.</text>
</comment>
<comment type="subunit">
    <text evidence="1">Forms oligomers.</text>
</comment>
<comment type="subcellular location">
    <subcellularLocation>
        <location evidence="1">Cytoplasm</location>
        <location evidence="1">Nucleoid</location>
    </subcellularLocation>
</comment>
<comment type="similarity">
    <text evidence="1">Belongs to the MraZ family.</text>
</comment>
<gene>
    <name evidence="1" type="primary">mraZ</name>
    <name type="ordered locus">PMI2079</name>
</gene>
<name>MRAZ_PROMH</name>
<reference key="1">
    <citation type="journal article" date="2008" name="J. Bacteriol.">
        <title>Complete genome sequence of uropathogenic Proteus mirabilis, a master of both adherence and motility.</title>
        <authorList>
            <person name="Pearson M.M."/>
            <person name="Sebaihia M."/>
            <person name="Churcher C."/>
            <person name="Quail M.A."/>
            <person name="Seshasayee A.S."/>
            <person name="Luscombe N.M."/>
            <person name="Abdellah Z."/>
            <person name="Arrosmith C."/>
            <person name="Atkin B."/>
            <person name="Chillingworth T."/>
            <person name="Hauser H."/>
            <person name="Jagels K."/>
            <person name="Moule S."/>
            <person name="Mungall K."/>
            <person name="Norbertczak H."/>
            <person name="Rabbinowitsch E."/>
            <person name="Walker D."/>
            <person name="Whithead S."/>
            <person name="Thomson N.R."/>
            <person name="Rather P.N."/>
            <person name="Parkhill J."/>
            <person name="Mobley H.L.T."/>
        </authorList>
    </citation>
    <scope>NUCLEOTIDE SEQUENCE [LARGE SCALE GENOMIC DNA]</scope>
    <source>
        <strain>HI4320</strain>
    </source>
</reference>
<protein>
    <recommendedName>
        <fullName>Transcriptional regulator MraZ</fullName>
    </recommendedName>
</protein>
<organism>
    <name type="scientific">Proteus mirabilis (strain HI4320)</name>
    <dbReference type="NCBI Taxonomy" id="529507"/>
    <lineage>
        <taxon>Bacteria</taxon>
        <taxon>Pseudomonadati</taxon>
        <taxon>Pseudomonadota</taxon>
        <taxon>Gammaproteobacteria</taxon>
        <taxon>Enterobacterales</taxon>
        <taxon>Morganellaceae</taxon>
        <taxon>Proteus</taxon>
    </lineage>
</organism>
<keyword id="KW-0963">Cytoplasm</keyword>
<keyword id="KW-0238">DNA-binding</keyword>
<keyword id="KW-1185">Reference proteome</keyword>
<keyword id="KW-0677">Repeat</keyword>
<keyword id="KW-0678">Repressor</keyword>
<keyword id="KW-0804">Transcription</keyword>
<keyword id="KW-0805">Transcription regulation</keyword>